<dbReference type="EC" id="4.2.3.3" evidence="1"/>
<dbReference type="EMBL" id="CU468135">
    <property type="protein sequence ID" value="CAO97143.1"/>
    <property type="molecule type" value="Genomic_DNA"/>
</dbReference>
<dbReference type="RefSeq" id="WP_012441814.1">
    <property type="nucleotide sequence ID" value="NC_010694.1"/>
</dbReference>
<dbReference type="SMR" id="B2VDH0"/>
<dbReference type="STRING" id="465817.ETA_20970"/>
<dbReference type="KEGG" id="eta:ETA_20970"/>
<dbReference type="eggNOG" id="COG1803">
    <property type="taxonomic scope" value="Bacteria"/>
</dbReference>
<dbReference type="HOGENOM" id="CLU_120420_0_1_6"/>
<dbReference type="OrthoDB" id="9787147at2"/>
<dbReference type="Proteomes" id="UP000001726">
    <property type="component" value="Chromosome"/>
</dbReference>
<dbReference type="GO" id="GO:0005829">
    <property type="term" value="C:cytosol"/>
    <property type="evidence" value="ECO:0007669"/>
    <property type="project" value="TreeGrafter"/>
</dbReference>
<dbReference type="GO" id="GO:0008929">
    <property type="term" value="F:methylglyoxal synthase activity"/>
    <property type="evidence" value="ECO:0007669"/>
    <property type="project" value="UniProtKB-UniRule"/>
</dbReference>
<dbReference type="GO" id="GO:0019242">
    <property type="term" value="P:methylglyoxal biosynthetic process"/>
    <property type="evidence" value="ECO:0007669"/>
    <property type="project" value="UniProtKB-UniRule"/>
</dbReference>
<dbReference type="CDD" id="cd01422">
    <property type="entry name" value="MGS"/>
    <property type="match status" value="1"/>
</dbReference>
<dbReference type="FunFam" id="3.40.50.1380:FF:000002">
    <property type="entry name" value="Methylglyoxal synthase"/>
    <property type="match status" value="1"/>
</dbReference>
<dbReference type="Gene3D" id="3.40.50.1380">
    <property type="entry name" value="Methylglyoxal synthase-like domain"/>
    <property type="match status" value="1"/>
</dbReference>
<dbReference type="HAMAP" id="MF_00549">
    <property type="entry name" value="Methylglyoxal_synth"/>
    <property type="match status" value="1"/>
</dbReference>
<dbReference type="InterPro" id="IPR004363">
    <property type="entry name" value="Methylgl_synth"/>
</dbReference>
<dbReference type="InterPro" id="IPR018148">
    <property type="entry name" value="Methylglyoxal_synth_AS"/>
</dbReference>
<dbReference type="InterPro" id="IPR011607">
    <property type="entry name" value="MGS-like_dom"/>
</dbReference>
<dbReference type="InterPro" id="IPR036914">
    <property type="entry name" value="MGS-like_dom_sf"/>
</dbReference>
<dbReference type="NCBIfam" id="TIGR00160">
    <property type="entry name" value="MGSA"/>
    <property type="match status" value="1"/>
</dbReference>
<dbReference type="NCBIfam" id="NF003559">
    <property type="entry name" value="PRK05234.1"/>
    <property type="match status" value="1"/>
</dbReference>
<dbReference type="PANTHER" id="PTHR30492">
    <property type="entry name" value="METHYLGLYOXAL SYNTHASE"/>
    <property type="match status" value="1"/>
</dbReference>
<dbReference type="PANTHER" id="PTHR30492:SF0">
    <property type="entry name" value="METHYLGLYOXAL SYNTHASE"/>
    <property type="match status" value="1"/>
</dbReference>
<dbReference type="Pfam" id="PF02142">
    <property type="entry name" value="MGS"/>
    <property type="match status" value="1"/>
</dbReference>
<dbReference type="PIRSF" id="PIRSF006614">
    <property type="entry name" value="Methylglyox_syn"/>
    <property type="match status" value="1"/>
</dbReference>
<dbReference type="SMART" id="SM00851">
    <property type="entry name" value="MGS"/>
    <property type="match status" value="1"/>
</dbReference>
<dbReference type="SUPFAM" id="SSF52335">
    <property type="entry name" value="Methylglyoxal synthase-like"/>
    <property type="match status" value="1"/>
</dbReference>
<dbReference type="PROSITE" id="PS01335">
    <property type="entry name" value="METHYLGLYOXAL_SYNTH"/>
    <property type="match status" value="1"/>
</dbReference>
<dbReference type="PROSITE" id="PS51855">
    <property type="entry name" value="MGS"/>
    <property type="match status" value="1"/>
</dbReference>
<accession>B2VDH0</accession>
<sequence>MDQTTRTVQAQKHIALVAHDHCKTSLMQWVAIHKEKLQHHILYATGTTGHLVQRATGLPVTAMMSGPMGGDQQVGALISEGRIDLLIFFWDPLNAVPHDPDVKALLRLATVWNIPVATNRTTADFIIHSPLFDRQVEIEIPDYQLYLQQRLK</sequence>
<feature type="chain" id="PRO_1000128994" description="Methylglyoxal synthase">
    <location>
        <begin position="1"/>
        <end position="152"/>
    </location>
</feature>
<feature type="domain" description="MGS-like" evidence="1">
    <location>
        <begin position="5"/>
        <end position="152"/>
    </location>
</feature>
<feature type="active site" description="Proton donor/acceptor" evidence="1">
    <location>
        <position position="71"/>
    </location>
</feature>
<feature type="binding site" evidence="1">
    <location>
        <position position="19"/>
    </location>
    <ligand>
        <name>substrate</name>
    </ligand>
</feature>
<feature type="binding site" evidence="1">
    <location>
        <position position="23"/>
    </location>
    <ligand>
        <name>substrate</name>
    </ligand>
</feature>
<feature type="binding site" evidence="1">
    <location>
        <begin position="45"/>
        <end position="48"/>
    </location>
    <ligand>
        <name>substrate</name>
    </ligand>
</feature>
<feature type="binding site" evidence="1">
    <location>
        <begin position="65"/>
        <end position="66"/>
    </location>
    <ligand>
        <name>substrate</name>
    </ligand>
</feature>
<feature type="binding site" evidence="1">
    <location>
        <position position="98"/>
    </location>
    <ligand>
        <name>substrate</name>
    </ligand>
</feature>
<protein>
    <recommendedName>
        <fullName evidence="1">Methylglyoxal synthase</fullName>
        <shortName evidence="1">MGS</shortName>
        <ecNumber evidence="1">4.2.3.3</ecNumber>
    </recommendedName>
</protein>
<organism>
    <name type="scientific">Erwinia tasmaniensis (strain DSM 17950 / CFBP 7177 / CIP 109463 / NCPPB 4357 / Et1/99)</name>
    <dbReference type="NCBI Taxonomy" id="465817"/>
    <lineage>
        <taxon>Bacteria</taxon>
        <taxon>Pseudomonadati</taxon>
        <taxon>Pseudomonadota</taxon>
        <taxon>Gammaproteobacteria</taxon>
        <taxon>Enterobacterales</taxon>
        <taxon>Erwiniaceae</taxon>
        <taxon>Erwinia</taxon>
    </lineage>
</organism>
<evidence type="ECO:0000255" key="1">
    <source>
        <dbReference type="HAMAP-Rule" id="MF_00549"/>
    </source>
</evidence>
<keyword id="KW-0456">Lyase</keyword>
<keyword id="KW-1185">Reference proteome</keyword>
<proteinExistence type="inferred from homology"/>
<reference key="1">
    <citation type="journal article" date="2008" name="Environ. Microbiol.">
        <title>The genome of Erwinia tasmaniensis strain Et1/99, a non-pathogenic bacterium in the genus Erwinia.</title>
        <authorList>
            <person name="Kube M."/>
            <person name="Migdoll A.M."/>
            <person name="Mueller I."/>
            <person name="Kuhl H."/>
            <person name="Beck A."/>
            <person name="Reinhardt R."/>
            <person name="Geider K."/>
        </authorList>
    </citation>
    <scope>NUCLEOTIDE SEQUENCE [LARGE SCALE GENOMIC DNA]</scope>
    <source>
        <strain>DSM 17950 / CFBP 7177 / CIP 109463 / NCPPB 4357 / Et1/99</strain>
    </source>
</reference>
<name>MGSA_ERWT9</name>
<gene>
    <name evidence="1" type="primary">mgsA</name>
    <name type="ordered locus">ETA_20970</name>
</gene>
<comment type="function">
    <text evidence="1">Catalyzes the formation of methylglyoxal from dihydroxyacetone phosphate.</text>
</comment>
<comment type="catalytic activity">
    <reaction evidence="1">
        <text>dihydroxyacetone phosphate = methylglyoxal + phosphate</text>
        <dbReference type="Rhea" id="RHEA:17937"/>
        <dbReference type="ChEBI" id="CHEBI:17158"/>
        <dbReference type="ChEBI" id="CHEBI:43474"/>
        <dbReference type="ChEBI" id="CHEBI:57642"/>
        <dbReference type="EC" id="4.2.3.3"/>
    </reaction>
</comment>
<comment type="similarity">
    <text evidence="1">Belongs to the methylglyoxal synthase family.</text>
</comment>